<dbReference type="EMBL" id="CP001089">
    <property type="protein sequence ID" value="ACD94677.1"/>
    <property type="molecule type" value="Genomic_DNA"/>
</dbReference>
<dbReference type="RefSeq" id="WP_012469027.1">
    <property type="nucleotide sequence ID" value="NC_010814.1"/>
</dbReference>
<dbReference type="SMR" id="B3E5K6"/>
<dbReference type="STRING" id="398767.Glov_0954"/>
<dbReference type="KEGG" id="glo:Glov_0954"/>
<dbReference type="eggNOG" id="COG0239">
    <property type="taxonomic scope" value="Bacteria"/>
</dbReference>
<dbReference type="HOGENOM" id="CLU_114342_3_2_7"/>
<dbReference type="OrthoDB" id="9806299at2"/>
<dbReference type="Proteomes" id="UP000002420">
    <property type="component" value="Chromosome"/>
</dbReference>
<dbReference type="GO" id="GO:0005886">
    <property type="term" value="C:plasma membrane"/>
    <property type="evidence" value="ECO:0007669"/>
    <property type="project" value="UniProtKB-SubCell"/>
</dbReference>
<dbReference type="GO" id="GO:0062054">
    <property type="term" value="F:fluoride channel activity"/>
    <property type="evidence" value="ECO:0007669"/>
    <property type="project" value="UniProtKB-UniRule"/>
</dbReference>
<dbReference type="GO" id="GO:0046872">
    <property type="term" value="F:metal ion binding"/>
    <property type="evidence" value="ECO:0007669"/>
    <property type="project" value="UniProtKB-KW"/>
</dbReference>
<dbReference type="GO" id="GO:0140114">
    <property type="term" value="P:cellular detoxification of fluoride"/>
    <property type="evidence" value="ECO:0007669"/>
    <property type="project" value="UniProtKB-UniRule"/>
</dbReference>
<dbReference type="HAMAP" id="MF_00454">
    <property type="entry name" value="FluC"/>
    <property type="match status" value="1"/>
</dbReference>
<dbReference type="InterPro" id="IPR003691">
    <property type="entry name" value="FluC"/>
</dbReference>
<dbReference type="NCBIfam" id="TIGR00494">
    <property type="entry name" value="crcB"/>
    <property type="match status" value="1"/>
</dbReference>
<dbReference type="PANTHER" id="PTHR28259">
    <property type="entry name" value="FLUORIDE EXPORT PROTEIN 1-RELATED"/>
    <property type="match status" value="1"/>
</dbReference>
<dbReference type="PANTHER" id="PTHR28259:SF1">
    <property type="entry name" value="FLUORIDE EXPORT PROTEIN 1-RELATED"/>
    <property type="match status" value="1"/>
</dbReference>
<dbReference type="Pfam" id="PF02537">
    <property type="entry name" value="CRCB"/>
    <property type="match status" value="1"/>
</dbReference>
<accession>B3E5K6</accession>
<organism>
    <name type="scientific">Trichlorobacter lovleyi (strain ATCC BAA-1151 / DSM 17278 / SZ)</name>
    <name type="common">Geobacter lovleyi</name>
    <dbReference type="NCBI Taxonomy" id="398767"/>
    <lineage>
        <taxon>Bacteria</taxon>
        <taxon>Pseudomonadati</taxon>
        <taxon>Thermodesulfobacteriota</taxon>
        <taxon>Desulfuromonadia</taxon>
        <taxon>Geobacterales</taxon>
        <taxon>Geobacteraceae</taxon>
        <taxon>Trichlorobacter</taxon>
    </lineage>
</organism>
<comment type="function">
    <text evidence="1">Fluoride-specific ion channel. Important for reducing fluoride concentration in the cell, thus reducing its toxicity.</text>
</comment>
<comment type="catalytic activity">
    <reaction evidence="1">
        <text>fluoride(in) = fluoride(out)</text>
        <dbReference type="Rhea" id="RHEA:76159"/>
        <dbReference type="ChEBI" id="CHEBI:17051"/>
    </reaction>
    <physiologicalReaction direction="left-to-right" evidence="1">
        <dbReference type="Rhea" id="RHEA:76160"/>
    </physiologicalReaction>
</comment>
<comment type="activity regulation">
    <text evidence="1">Na(+) is not transported, but it plays an essential structural role and its presence is essential for fluoride channel function.</text>
</comment>
<comment type="subcellular location">
    <subcellularLocation>
        <location evidence="1">Cell inner membrane</location>
        <topology evidence="1">Multi-pass membrane protein</topology>
    </subcellularLocation>
</comment>
<comment type="similarity">
    <text evidence="1">Belongs to the fluoride channel Fluc/FEX (TC 1.A.43) family.</text>
</comment>
<gene>
    <name evidence="1" type="primary">fluC</name>
    <name evidence="1" type="synonym">crcB</name>
    <name type="ordered locus">Glov_0954</name>
</gene>
<keyword id="KW-0997">Cell inner membrane</keyword>
<keyword id="KW-1003">Cell membrane</keyword>
<keyword id="KW-0407">Ion channel</keyword>
<keyword id="KW-0406">Ion transport</keyword>
<keyword id="KW-0472">Membrane</keyword>
<keyword id="KW-0479">Metal-binding</keyword>
<keyword id="KW-1185">Reference proteome</keyword>
<keyword id="KW-0915">Sodium</keyword>
<keyword id="KW-0812">Transmembrane</keyword>
<keyword id="KW-1133">Transmembrane helix</keyword>
<keyword id="KW-0813">Transport</keyword>
<feature type="chain" id="PRO_1000206250" description="Fluoride-specific ion channel FluC">
    <location>
        <begin position="1"/>
        <end position="125"/>
    </location>
</feature>
<feature type="transmembrane region" description="Helical" evidence="1">
    <location>
        <begin position="9"/>
        <end position="29"/>
    </location>
</feature>
<feature type="transmembrane region" description="Helical" evidence="1">
    <location>
        <begin position="32"/>
        <end position="52"/>
    </location>
</feature>
<feature type="transmembrane region" description="Helical" evidence="1">
    <location>
        <begin position="67"/>
        <end position="87"/>
    </location>
</feature>
<feature type="transmembrane region" description="Helical" evidence="1">
    <location>
        <begin position="99"/>
        <end position="119"/>
    </location>
</feature>
<feature type="binding site" evidence="1">
    <location>
        <position position="75"/>
    </location>
    <ligand>
        <name>Na(+)</name>
        <dbReference type="ChEBI" id="CHEBI:29101"/>
        <note>structural</note>
    </ligand>
</feature>
<feature type="binding site" evidence="1">
    <location>
        <position position="78"/>
    </location>
    <ligand>
        <name>Na(+)</name>
        <dbReference type="ChEBI" id="CHEBI:29101"/>
        <note>structural</note>
    </ligand>
</feature>
<name>FLUC_TRIL1</name>
<protein>
    <recommendedName>
        <fullName evidence="1">Fluoride-specific ion channel FluC</fullName>
    </recommendedName>
</protein>
<sequence length="125" mass="13447">MKTAATIALFCAGGGLTRYYLSGWIYGLLGRAFPYGTLVVNIIGAYCIGLIMELGLRSTMLSDTLRIGLTVGFMGGLTTFSTFSYETFKLLEDGQFVMAFTNVLASVAVCLLCTWLGIITVRSLA</sequence>
<proteinExistence type="inferred from homology"/>
<reference key="1">
    <citation type="submission" date="2008-05" db="EMBL/GenBank/DDBJ databases">
        <title>Complete sequence of chromosome of Geobacter lovleyi SZ.</title>
        <authorList>
            <consortium name="US DOE Joint Genome Institute"/>
            <person name="Lucas S."/>
            <person name="Copeland A."/>
            <person name="Lapidus A."/>
            <person name="Glavina del Rio T."/>
            <person name="Dalin E."/>
            <person name="Tice H."/>
            <person name="Bruce D."/>
            <person name="Goodwin L."/>
            <person name="Pitluck S."/>
            <person name="Chertkov O."/>
            <person name="Meincke L."/>
            <person name="Brettin T."/>
            <person name="Detter J.C."/>
            <person name="Han C."/>
            <person name="Tapia R."/>
            <person name="Kuske C.R."/>
            <person name="Schmutz J."/>
            <person name="Larimer F."/>
            <person name="Land M."/>
            <person name="Hauser L."/>
            <person name="Kyrpides N."/>
            <person name="Mikhailova N."/>
            <person name="Sung Y."/>
            <person name="Fletcher K.E."/>
            <person name="Ritalahti K.M."/>
            <person name="Loeffler F.E."/>
            <person name="Richardson P."/>
        </authorList>
    </citation>
    <scope>NUCLEOTIDE SEQUENCE [LARGE SCALE GENOMIC DNA]</scope>
    <source>
        <strain>ATCC BAA-1151 / DSM 17278 / SZ</strain>
    </source>
</reference>
<evidence type="ECO:0000255" key="1">
    <source>
        <dbReference type="HAMAP-Rule" id="MF_00454"/>
    </source>
</evidence>